<accession>Q89AJ6</accession>
<evidence type="ECO:0000250" key="1"/>
<evidence type="ECO:0000250" key="2">
    <source>
        <dbReference type="UniProtKB" id="P0AFG6"/>
    </source>
</evidence>
<evidence type="ECO:0000255" key="3">
    <source>
        <dbReference type="PROSITE-ProRule" id="PRU01066"/>
    </source>
</evidence>
<evidence type="ECO:0000255" key="4">
    <source>
        <dbReference type="PROSITE-ProRule" id="PRU01170"/>
    </source>
</evidence>
<evidence type="ECO:0000305" key="5"/>
<keyword id="KW-0012">Acyltransferase</keyword>
<keyword id="KW-0450">Lipoyl</keyword>
<keyword id="KW-1185">Reference proteome</keyword>
<keyword id="KW-0808">Transferase</keyword>
<keyword id="KW-0816">Tricarboxylic acid cycle</keyword>
<name>ODO2_BUCBP</name>
<dbReference type="EC" id="2.3.1.61" evidence="2"/>
<dbReference type="EMBL" id="AE016826">
    <property type="protein sequence ID" value="AAO27006.1"/>
    <property type="molecule type" value="Genomic_DNA"/>
</dbReference>
<dbReference type="RefSeq" id="WP_011091407.1">
    <property type="nucleotide sequence ID" value="NC_004545.1"/>
</dbReference>
<dbReference type="SMR" id="Q89AJ6"/>
<dbReference type="STRING" id="224915.bbp_281"/>
<dbReference type="KEGG" id="bab:bbp_281"/>
<dbReference type="eggNOG" id="COG0508">
    <property type="taxonomic scope" value="Bacteria"/>
</dbReference>
<dbReference type="HOGENOM" id="CLU_016733_0_0_6"/>
<dbReference type="OrthoDB" id="9805770at2"/>
<dbReference type="UniPathway" id="UPA00868">
    <property type="reaction ID" value="UER00840"/>
</dbReference>
<dbReference type="Proteomes" id="UP000000601">
    <property type="component" value="Chromosome"/>
</dbReference>
<dbReference type="GO" id="GO:0005829">
    <property type="term" value="C:cytosol"/>
    <property type="evidence" value="ECO:0007669"/>
    <property type="project" value="TreeGrafter"/>
</dbReference>
<dbReference type="GO" id="GO:0045252">
    <property type="term" value="C:oxoglutarate dehydrogenase complex"/>
    <property type="evidence" value="ECO:0007669"/>
    <property type="project" value="InterPro"/>
</dbReference>
<dbReference type="GO" id="GO:0004149">
    <property type="term" value="F:dihydrolipoyllysine-residue succinyltransferase activity"/>
    <property type="evidence" value="ECO:0007669"/>
    <property type="project" value="UniProtKB-EC"/>
</dbReference>
<dbReference type="GO" id="GO:0033512">
    <property type="term" value="P:L-lysine catabolic process to acetyl-CoA via saccharopine"/>
    <property type="evidence" value="ECO:0007669"/>
    <property type="project" value="UniProtKB-UniPathway"/>
</dbReference>
<dbReference type="GO" id="GO:0006099">
    <property type="term" value="P:tricarboxylic acid cycle"/>
    <property type="evidence" value="ECO:0007669"/>
    <property type="project" value="UniProtKB-KW"/>
</dbReference>
<dbReference type="CDD" id="cd06849">
    <property type="entry name" value="lipoyl_domain"/>
    <property type="match status" value="1"/>
</dbReference>
<dbReference type="Gene3D" id="2.40.50.100">
    <property type="match status" value="1"/>
</dbReference>
<dbReference type="Gene3D" id="3.30.559.10">
    <property type="entry name" value="Chloramphenicol acetyltransferase-like domain"/>
    <property type="match status" value="1"/>
</dbReference>
<dbReference type="Gene3D" id="4.10.320.10">
    <property type="entry name" value="E3-binding domain"/>
    <property type="match status" value="1"/>
</dbReference>
<dbReference type="InterPro" id="IPR003016">
    <property type="entry name" value="2-oxoA_DH_lipoyl-BS"/>
</dbReference>
<dbReference type="InterPro" id="IPR050537">
    <property type="entry name" value="2-oxoacid_dehydrogenase"/>
</dbReference>
<dbReference type="InterPro" id="IPR001078">
    <property type="entry name" value="2-oxoacid_DH_actylTfrase"/>
</dbReference>
<dbReference type="InterPro" id="IPR000089">
    <property type="entry name" value="Biotin_lipoyl"/>
</dbReference>
<dbReference type="InterPro" id="IPR023213">
    <property type="entry name" value="CAT-like_dom_sf"/>
</dbReference>
<dbReference type="InterPro" id="IPR036625">
    <property type="entry name" value="E3-bd_dom_sf"/>
</dbReference>
<dbReference type="InterPro" id="IPR004167">
    <property type="entry name" value="PSBD"/>
</dbReference>
<dbReference type="InterPro" id="IPR011053">
    <property type="entry name" value="Single_hybrid_motif"/>
</dbReference>
<dbReference type="InterPro" id="IPR006255">
    <property type="entry name" value="SucB"/>
</dbReference>
<dbReference type="NCBIfam" id="NF004309">
    <property type="entry name" value="PRK05704.1"/>
    <property type="match status" value="1"/>
</dbReference>
<dbReference type="NCBIfam" id="TIGR01347">
    <property type="entry name" value="sucB"/>
    <property type="match status" value="1"/>
</dbReference>
<dbReference type="PANTHER" id="PTHR43416:SF5">
    <property type="entry name" value="DIHYDROLIPOYLLYSINE-RESIDUE SUCCINYLTRANSFERASE COMPONENT OF 2-OXOGLUTARATE DEHYDROGENASE COMPLEX, MITOCHONDRIAL"/>
    <property type="match status" value="1"/>
</dbReference>
<dbReference type="PANTHER" id="PTHR43416">
    <property type="entry name" value="DIHYDROLIPOYLLYSINE-RESIDUE SUCCINYLTRANSFERASE COMPONENT OF 2-OXOGLUTARATE DEHYDROGENASE COMPLEX, MITOCHONDRIAL-RELATED"/>
    <property type="match status" value="1"/>
</dbReference>
<dbReference type="Pfam" id="PF00198">
    <property type="entry name" value="2-oxoacid_dh"/>
    <property type="match status" value="1"/>
</dbReference>
<dbReference type="Pfam" id="PF00364">
    <property type="entry name" value="Biotin_lipoyl"/>
    <property type="match status" value="1"/>
</dbReference>
<dbReference type="SUPFAM" id="SSF52777">
    <property type="entry name" value="CoA-dependent acyltransferases"/>
    <property type="match status" value="1"/>
</dbReference>
<dbReference type="SUPFAM" id="SSF47005">
    <property type="entry name" value="Peripheral subunit-binding domain of 2-oxo acid dehydrogenase complex"/>
    <property type="match status" value="1"/>
</dbReference>
<dbReference type="SUPFAM" id="SSF51230">
    <property type="entry name" value="Single hybrid motif"/>
    <property type="match status" value="1"/>
</dbReference>
<dbReference type="PROSITE" id="PS50968">
    <property type="entry name" value="BIOTINYL_LIPOYL"/>
    <property type="match status" value="1"/>
</dbReference>
<dbReference type="PROSITE" id="PS00189">
    <property type="entry name" value="LIPOYL"/>
    <property type="match status" value="1"/>
</dbReference>
<dbReference type="PROSITE" id="PS51826">
    <property type="entry name" value="PSBD"/>
    <property type="match status" value="1"/>
</dbReference>
<organism>
    <name type="scientific">Buchnera aphidicola subsp. Baizongia pistaciae (strain Bp)</name>
    <dbReference type="NCBI Taxonomy" id="224915"/>
    <lineage>
        <taxon>Bacteria</taxon>
        <taxon>Pseudomonadati</taxon>
        <taxon>Pseudomonadota</taxon>
        <taxon>Gammaproteobacteria</taxon>
        <taxon>Enterobacterales</taxon>
        <taxon>Erwiniaceae</taxon>
        <taxon>Buchnera</taxon>
    </lineage>
</organism>
<reference key="1">
    <citation type="journal article" date="2003" name="Proc. Natl. Acad. Sci. U.S.A.">
        <title>Reductive genome evolution in Buchnera aphidicola.</title>
        <authorList>
            <person name="van Ham R.C.H.J."/>
            <person name="Kamerbeek J."/>
            <person name="Palacios C."/>
            <person name="Rausell C."/>
            <person name="Abascal F."/>
            <person name="Bastolla U."/>
            <person name="Fernandez J.M."/>
            <person name="Jimenez L."/>
            <person name="Postigo M."/>
            <person name="Silva F.J."/>
            <person name="Tamames J."/>
            <person name="Viguera E."/>
            <person name="Latorre A."/>
            <person name="Valencia A."/>
            <person name="Moran F."/>
            <person name="Moya A."/>
        </authorList>
    </citation>
    <scope>NUCLEOTIDE SEQUENCE [LARGE SCALE GENOMIC DNA]</scope>
    <source>
        <strain>Bp</strain>
    </source>
</reference>
<sequence length="410" mass="46543">MNIINIFIPDLPESVTDATIIKWHKKKGDKVQEDTILVDIETDKVILEIPSPSDGILNSIIADKGKIVLPGQVIGTLLKIGIKNEEKIIKTTNNVVNTDNNQNINLKLLEKTYSPTVRRLISMHDLRDVDIIQGTGTKNRLTRKDILNYLKNIRSNTNKKINNYDLNAYNFNTTHKNHRSIKRVKMTRLRKKISERLLSTKNNTASLTTFNEVNMQSILNLRRKYGELFKQKHGIKLGLMSFYVKAVIEALKIFPEINASIDNDEIIYYNYFDISIAISTPRGLVTPVLKNADLMSMAEIEIKIKDFSEKGKNSKLTIDDLIGGNFTITNGGVFGSLFSTPLINPPQSAILGMHAIHKRPVIVDENIEVHPMMYLALSYDHRLIDGKESVGFLLKIKEFLEDFSRIVLNI</sequence>
<feature type="chain" id="PRO_0000162261" description="Dihydrolipoyllysine-residue succinyltransferase component of 2-oxoglutarate dehydrogenase complex">
    <location>
        <begin position="1"/>
        <end position="410"/>
    </location>
</feature>
<feature type="domain" description="Lipoyl-binding" evidence="3">
    <location>
        <begin position="3"/>
        <end position="81"/>
    </location>
</feature>
<feature type="domain" description="Peripheral subunit-binding (PSBD)" evidence="4">
    <location>
        <begin position="112"/>
        <end position="150"/>
    </location>
</feature>
<feature type="active site" evidence="2">
    <location>
        <position position="381"/>
    </location>
</feature>
<feature type="active site" evidence="2">
    <location>
        <position position="385"/>
    </location>
</feature>
<feature type="modified residue" description="N6-lipoyllysine" evidence="3">
    <location>
        <position position="44"/>
    </location>
</feature>
<gene>
    <name type="primary">sucB</name>
    <name type="ordered locus">bbp_281</name>
</gene>
<protein>
    <recommendedName>
        <fullName>Dihydrolipoyllysine-residue succinyltransferase component of 2-oxoglutarate dehydrogenase complex</fullName>
        <ecNumber evidence="2">2.3.1.61</ecNumber>
    </recommendedName>
    <alternativeName>
        <fullName>2-oxoglutarate dehydrogenase complex component E2</fullName>
        <shortName>OGDC-E2</shortName>
    </alternativeName>
    <alternativeName>
        <fullName>Dihydrolipoamide succinyltransferase component of 2-oxoglutarate dehydrogenase complex</fullName>
    </alternativeName>
</protein>
<proteinExistence type="inferred from homology"/>
<comment type="function">
    <text evidence="2">E2 component of the 2-oxoglutarate dehydrogenase (OGDH) complex which catalyzes the second step in the conversion of 2-oxoglutarate to succinyl-CoA and CO(2).</text>
</comment>
<comment type="catalytic activity">
    <reaction evidence="2">
        <text>N(6)-[(R)-dihydrolipoyl]-L-lysyl-[protein] + succinyl-CoA = N(6)-[(R)-S(8)-succinyldihydrolipoyl]-L-lysyl-[protein] + CoA</text>
        <dbReference type="Rhea" id="RHEA:15213"/>
        <dbReference type="Rhea" id="RHEA-COMP:10475"/>
        <dbReference type="Rhea" id="RHEA-COMP:20092"/>
        <dbReference type="ChEBI" id="CHEBI:57287"/>
        <dbReference type="ChEBI" id="CHEBI:57292"/>
        <dbReference type="ChEBI" id="CHEBI:83100"/>
        <dbReference type="ChEBI" id="CHEBI:83120"/>
        <dbReference type="EC" id="2.3.1.61"/>
    </reaction>
</comment>
<comment type="cofactor">
    <cofactor evidence="1">
        <name>(R)-lipoate</name>
        <dbReference type="ChEBI" id="CHEBI:83088"/>
    </cofactor>
    <text evidence="1">Binds 1 lipoyl cofactor covalently.</text>
</comment>
<comment type="pathway">
    <text>Amino-acid degradation; L-lysine degradation via saccharopine pathway; glutaryl-CoA from L-lysine: step 6/6.</text>
</comment>
<comment type="subunit">
    <text evidence="2">Forms a 24-polypeptide structural core with octahedral symmetry. Part of the 2-oxoglutarate dehydrogenase (OGDH) complex composed of E1 (2-oxoglutarate dehydrogenase), E2 (dihydrolipoamide succinyltransferase) and E3 (dihydrolipoamide dehydrogenase); the complex contains multiple copies of the three enzymatic components (E1, E2 and E3).</text>
</comment>
<comment type="similarity">
    <text evidence="5">Belongs to the 2-oxoacid dehydrogenase family.</text>
</comment>